<name>MCHR2_MACFA</name>
<protein>
    <recommendedName>
        <fullName>Melanin-concentrating hormone receptor 2</fullName>
        <shortName>MCH receptor 2</shortName>
        <shortName>MCH-R2</shortName>
        <shortName>MCHR-2</shortName>
    </recommendedName>
    <alternativeName>
        <fullName>G-protein coupled receptor 145</fullName>
    </alternativeName>
    <alternativeName>
        <fullName>GPRv17</fullName>
    </alternativeName>
    <alternativeName>
        <fullName>MCH-2R</fullName>
        <shortName>MCH2</shortName>
        <shortName>MCH2R</shortName>
    </alternativeName>
</protein>
<organism>
    <name type="scientific">Macaca fascicularis</name>
    <name type="common">Crab-eating macaque</name>
    <name type="synonym">Cynomolgus monkey</name>
    <dbReference type="NCBI Taxonomy" id="9541"/>
    <lineage>
        <taxon>Eukaryota</taxon>
        <taxon>Metazoa</taxon>
        <taxon>Chordata</taxon>
        <taxon>Craniata</taxon>
        <taxon>Vertebrata</taxon>
        <taxon>Euteleostomi</taxon>
        <taxon>Mammalia</taxon>
        <taxon>Eutheria</taxon>
        <taxon>Euarchontoglires</taxon>
        <taxon>Primates</taxon>
        <taxon>Haplorrhini</taxon>
        <taxon>Catarrhini</taxon>
        <taxon>Cercopithecidae</taxon>
        <taxon>Cercopithecinae</taxon>
        <taxon>Macaca</taxon>
    </lineage>
</organism>
<sequence>MNPFHSSCWNTSAELSNKSWNKEFAYQTASAVDTVILPSMIGIICSTGLVGNILIVFTIIRSRKKTVPDIYICNLAVADLVHIIGMPFLIHQWARGGEWVFGGPLCTIITSLDTCNQFACSAIMTVMSVDRYFALVQPFRLTSWRTRYKTIRINLGLWAASFILALPVWIYSKVIKFKDGVESCAFDLTSPDDVLWYTLYLTITTFFFPLPLILVCYILILCYTWEMYQQNKDARCCNPSVPKQRVMKLTKMVLVLVAVFILSAAPYHVIQLVNLQMEQPTLAFYVGYYLSICLSYASSSINPFLYILLSGNFQKRLPQIQRRVTDKEIKNMGNTLKSHF</sequence>
<feature type="chain" id="PRO_0000069741" description="Melanin-concentrating hormone receptor 2">
    <location>
        <begin position="1"/>
        <end position="340"/>
    </location>
</feature>
<feature type="topological domain" description="Extracellular" evidence="1">
    <location>
        <begin position="1"/>
        <end position="34"/>
    </location>
</feature>
<feature type="transmembrane region" description="Helical; Name=1" evidence="1">
    <location>
        <begin position="35"/>
        <end position="57"/>
    </location>
</feature>
<feature type="topological domain" description="Cytoplasmic" evidence="1">
    <location>
        <begin position="58"/>
        <end position="69"/>
    </location>
</feature>
<feature type="transmembrane region" description="Helical; Name=2" evidence="1">
    <location>
        <begin position="70"/>
        <end position="92"/>
    </location>
</feature>
<feature type="topological domain" description="Extracellular" evidence="1">
    <location>
        <begin position="93"/>
        <end position="106"/>
    </location>
</feature>
<feature type="transmembrane region" description="Helical; Name=3" evidence="1">
    <location>
        <begin position="107"/>
        <end position="129"/>
    </location>
</feature>
<feature type="topological domain" description="Cytoplasmic" evidence="1">
    <location>
        <begin position="130"/>
        <end position="149"/>
    </location>
</feature>
<feature type="transmembrane region" description="Helical; Name=4" evidence="1">
    <location>
        <begin position="150"/>
        <end position="172"/>
    </location>
</feature>
<feature type="topological domain" description="Extracellular" evidence="1">
    <location>
        <begin position="173"/>
        <end position="198"/>
    </location>
</feature>
<feature type="transmembrane region" description="Helical; Name=5" evidence="1">
    <location>
        <begin position="199"/>
        <end position="221"/>
    </location>
</feature>
<feature type="topological domain" description="Cytoplasmic" evidence="1">
    <location>
        <begin position="222"/>
        <end position="252"/>
    </location>
</feature>
<feature type="transmembrane region" description="Helical; Name=6" evidence="1">
    <location>
        <begin position="253"/>
        <end position="272"/>
    </location>
</feature>
<feature type="topological domain" description="Extracellular" evidence="1">
    <location>
        <begin position="273"/>
        <end position="286"/>
    </location>
</feature>
<feature type="transmembrane region" description="Helical; Name=7" evidence="1">
    <location>
        <begin position="287"/>
        <end position="309"/>
    </location>
</feature>
<feature type="topological domain" description="Cytoplasmic" evidence="1">
    <location>
        <begin position="310"/>
        <end position="340"/>
    </location>
</feature>
<feature type="glycosylation site" description="N-linked (GlcNAc...) asparagine" evidence="1">
    <location>
        <position position="10"/>
    </location>
</feature>
<feature type="glycosylation site" description="N-linked (GlcNAc...) asparagine" evidence="1">
    <location>
        <position position="17"/>
    </location>
</feature>
<keyword id="KW-1003">Cell membrane</keyword>
<keyword id="KW-0297">G-protein coupled receptor</keyword>
<keyword id="KW-0325">Glycoprotein</keyword>
<keyword id="KW-0472">Membrane</keyword>
<keyword id="KW-0675">Receptor</keyword>
<keyword id="KW-1185">Reference proteome</keyword>
<keyword id="KW-0807">Transducer</keyword>
<keyword id="KW-0812">Transmembrane</keyword>
<keyword id="KW-1133">Transmembrane helix</keyword>
<accession>Q8SQ54</accession>
<reference key="1">
    <citation type="submission" date="2001-03" db="EMBL/GenBank/DDBJ databases">
        <title>Molecular characterization of a novel melanin-concentrating hormone receptor: evidence of its expression in lateral hypothalamus.</title>
        <authorList>
            <person name="Kurama T."/>
            <person name="Matsumoto S."/>
            <person name="Takasaki J."/>
            <person name="Terai K."/>
            <person name="Matsumoto M."/>
            <person name="Kamohara M."/>
            <person name="Saito T."/>
            <person name="Soga T."/>
            <person name="Saito Y."/>
            <person name="Oda T."/>
            <person name="Masuho Y."/>
            <person name="Furuichi K."/>
        </authorList>
    </citation>
    <scope>NUCLEOTIDE SEQUENCE [MRNA]</scope>
</reference>
<evidence type="ECO:0000255" key="1"/>
<evidence type="ECO:0000255" key="2">
    <source>
        <dbReference type="PROSITE-ProRule" id="PRU00521"/>
    </source>
</evidence>
<comment type="function">
    <text>Receptor for melanin-concentrating hormone, coupled to G proteins that activate phosphoinositide hydrolysis.</text>
</comment>
<comment type="subcellular location">
    <subcellularLocation>
        <location>Cell membrane</location>
        <topology>Multi-pass membrane protein</topology>
    </subcellularLocation>
</comment>
<comment type="similarity">
    <text evidence="2">Belongs to the G-protein coupled receptor 1 family.</text>
</comment>
<gene>
    <name type="primary">MCHR2</name>
    <name type="synonym">GPR145</name>
</gene>
<dbReference type="EMBL" id="AB058850">
    <property type="protein sequence ID" value="BAB87843.1"/>
    <property type="molecule type" value="mRNA"/>
</dbReference>
<dbReference type="RefSeq" id="NP_001306455.1">
    <property type="nucleotide sequence ID" value="NM_001319526.1"/>
</dbReference>
<dbReference type="SMR" id="Q8SQ54"/>
<dbReference type="STRING" id="9541.ENSMFAP00000042853"/>
<dbReference type="GlyCosmos" id="Q8SQ54">
    <property type="glycosylation" value="2 sites, No reported glycans"/>
</dbReference>
<dbReference type="eggNOG" id="KOG3656">
    <property type="taxonomic scope" value="Eukaryota"/>
</dbReference>
<dbReference type="Proteomes" id="UP000233100">
    <property type="component" value="Unplaced"/>
</dbReference>
<dbReference type="GO" id="GO:0043005">
    <property type="term" value="C:neuron projection"/>
    <property type="evidence" value="ECO:0007669"/>
    <property type="project" value="TreeGrafter"/>
</dbReference>
<dbReference type="GO" id="GO:0005886">
    <property type="term" value="C:plasma membrane"/>
    <property type="evidence" value="ECO:0007669"/>
    <property type="project" value="UniProtKB-SubCell"/>
</dbReference>
<dbReference type="GO" id="GO:0004930">
    <property type="term" value="F:G protein-coupled receptor activity"/>
    <property type="evidence" value="ECO:0007669"/>
    <property type="project" value="UniProtKB-KW"/>
</dbReference>
<dbReference type="GO" id="GO:0042923">
    <property type="term" value="F:neuropeptide binding"/>
    <property type="evidence" value="ECO:0007669"/>
    <property type="project" value="TreeGrafter"/>
</dbReference>
<dbReference type="GO" id="GO:0007218">
    <property type="term" value="P:neuropeptide signaling pathway"/>
    <property type="evidence" value="ECO:0007669"/>
    <property type="project" value="TreeGrafter"/>
</dbReference>
<dbReference type="CDD" id="cd15339">
    <property type="entry name" value="7tmA_MCHR2"/>
    <property type="match status" value="1"/>
</dbReference>
<dbReference type="FunFam" id="1.20.1070.10:FF:000218">
    <property type="entry name" value="melanin-concentrating hormone receptor 2"/>
    <property type="match status" value="1"/>
</dbReference>
<dbReference type="Gene3D" id="1.20.1070.10">
    <property type="entry name" value="Rhodopsin 7-helix transmembrane proteins"/>
    <property type="match status" value="1"/>
</dbReference>
<dbReference type="InterPro" id="IPR000276">
    <property type="entry name" value="GPCR_Rhodpsn"/>
</dbReference>
<dbReference type="InterPro" id="IPR017452">
    <property type="entry name" value="GPCR_Rhodpsn_7TM"/>
</dbReference>
<dbReference type="InterPro" id="IPR008361">
    <property type="entry name" value="MCH_rcpt"/>
</dbReference>
<dbReference type="InterPro" id="IPR008362">
    <property type="entry name" value="MCHR2"/>
</dbReference>
<dbReference type="PANTHER" id="PTHR24229:SF88">
    <property type="entry name" value="MELANIN-CONCENTRATING HORMONE RECEPTOR 2-RELATED"/>
    <property type="match status" value="1"/>
</dbReference>
<dbReference type="PANTHER" id="PTHR24229">
    <property type="entry name" value="NEUROPEPTIDES RECEPTOR"/>
    <property type="match status" value="1"/>
</dbReference>
<dbReference type="Pfam" id="PF00001">
    <property type="entry name" value="7tm_1"/>
    <property type="match status" value="1"/>
</dbReference>
<dbReference type="PRINTS" id="PR00237">
    <property type="entry name" value="GPCRRHODOPSN"/>
</dbReference>
<dbReference type="PRINTS" id="PR01784">
    <property type="entry name" value="MCH2RECEPTOR"/>
</dbReference>
<dbReference type="PRINTS" id="PR01783">
    <property type="entry name" value="MCHRECEPTOR"/>
</dbReference>
<dbReference type="SUPFAM" id="SSF81321">
    <property type="entry name" value="Family A G protein-coupled receptor-like"/>
    <property type="match status" value="1"/>
</dbReference>
<dbReference type="PROSITE" id="PS00237">
    <property type="entry name" value="G_PROTEIN_RECEP_F1_1"/>
    <property type="match status" value="1"/>
</dbReference>
<dbReference type="PROSITE" id="PS50262">
    <property type="entry name" value="G_PROTEIN_RECEP_F1_2"/>
    <property type="match status" value="1"/>
</dbReference>
<proteinExistence type="evidence at transcript level"/>